<evidence type="ECO:0000255" key="1">
    <source>
        <dbReference type="HAMAP-Rule" id="MF_00233"/>
    </source>
</evidence>
<dbReference type="EMBL" id="CP000026">
    <property type="protein sequence ID" value="AAV77064.1"/>
    <property type="molecule type" value="Genomic_DNA"/>
</dbReference>
<dbReference type="RefSeq" id="WP_000174484.1">
    <property type="nucleotide sequence ID" value="NC_006511.1"/>
</dbReference>
<dbReference type="SMR" id="Q5PCR1"/>
<dbReference type="KEGG" id="spt:SPA1095"/>
<dbReference type="HOGENOM" id="CLU_092816_1_1_6"/>
<dbReference type="Proteomes" id="UP000008185">
    <property type="component" value="Chromosome"/>
</dbReference>
<dbReference type="GO" id="GO:0009279">
    <property type="term" value="C:cell outer membrane"/>
    <property type="evidence" value="ECO:0007669"/>
    <property type="project" value="UniProtKB-SubCell"/>
</dbReference>
<dbReference type="GO" id="GO:0044874">
    <property type="term" value="P:lipoprotein localization to outer membrane"/>
    <property type="evidence" value="ECO:0007669"/>
    <property type="project" value="UniProtKB-UniRule"/>
</dbReference>
<dbReference type="GO" id="GO:0015031">
    <property type="term" value="P:protein transport"/>
    <property type="evidence" value="ECO:0007669"/>
    <property type="project" value="UniProtKB-KW"/>
</dbReference>
<dbReference type="CDD" id="cd16326">
    <property type="entry name" value="LolB"/>
    <property type="match status" value="1"/>
</dbReference>
<dbReference type="FunFam" id="2.50.20.10:FF:000002">
    <property type="entry name" value="Outer-membrane lipoprotein LolB"/>
    <property type="match status" value="1"/>
</dbReference>
<dbReference type="Gene3D" id="2.50.20.10">
    <property type="entry name" value="Lipoprotein localisation LolA/LolB/LppX"/>
    <property type="match status" value="1"/>
</dbReference>
<dbReference type="HAMAP" id="MF_00233">
    <property type="entry name" value="LolB"/>
    <property type="match status" value="1"/>
</dbReference>
<dbReference type="InterPro" id="IPR029046">
    <property type="entry name" value="LolA/LolB/LppX"/>
</dbReference>
<dbReference type="InterPro" id="IPR004565">
    <property type="entry name" value="OM_lipoprot_LolB"/>
</dbReference>
<dbReference type="NCBIfam" id="TIGR00548">
    <property type="entry name" value="lolB"/>
    <property type="match status" value="1"/>
</dbReference>
<dbReference type="Pfam" id="PF03550">
    <property type="entry name" value="LolB"/>
    <property type="match status" value="1"/>
</dbReference>
<dbReference type="SUPFAM" id="SSF89392">
    <property type="entry name" value="Prokaryotic lipoproteins and lipoprotein localization factors"/>
    <property type="match status" value="1"/>
</dbReference>
<dbReference type="PROSITE" id="PS51257">
    <property type="entry name" value="PROKAR_LIPOPROTEIN"/>
    <property type="match status" value="1"/>
</dbReference>
<protein>
    <recommendedName>
        <fullName evidence="1">Outer-membrane lipoprotein LolB</fullName>
    </recommendedName>
</protein>
<accession>Q5PCR1</accession>
<organism>
    <name type="scientific">Salmonella paratyphi A (strain ATCC 9150 / SARB42)</name>
    <dbReference type="NCBI Taxonomy" id="295319"/>
    <lineage>
        <taxon>Bacteria</taxon>
        <taxon>Pseudomonadati</taxon>
        <taxon>Pseudomonadota</taxon>
        <taxon>Gammaproteobacteria</taxon>
        <taxon>Enterobacterales</taxon>
        <taxon>Enterobacteriaceae</taxon>
        <taxon>Salmonella</taxon>
    </lineage>
</organism>
<proteinExistence type="inferred from homology"/>
<keyword id="KW-0998">Cell outer membrane</keyword>
<keyword id="KW-0143">Chaperone</keyword>
<keyword id="KW-0449">Lipoprotein</keyword>
<keyword id="KW-0472">Membrane</keyword>
<keyword id="KW-0564">Palmitate</keyword>
<keyword id="KW-0653">Protein transport</keyword>
<keyword id="KW-0732">Signal</keyword>
<keyword id="KW-0813">Transport</keyword>
<feature type="signal peptide" evidence="1">
    <location>
        <begin position="1"/>
        <end position="21"/>
    </location>
</feature>
<feature type="chain" id="PRO_1000021677" description="Outer-membrane lipoprotein LolB">
    <location>
        <begin position="22"/>
        <end position="207"/>
    </location>
</feature>
<feature type="lipid moiety-binding region" description="N-palmitoyl cysteine" evidence="1">
    <location>
        <position position="22"/>
    </location>
</feature>
<feature type="lipid moiety-binding region" description="S-diacylglycerol cysteine" evidence="1">
    <location>
        <position position="22"/>
    </location>
</feature>
<gene>
    <name evidence="1" type="primary">lolB</name>
    <name type="ordered locus">SPA1095</name>
</gene>
<name>LOLB_SALPA</name>
<reference key="1">
    <citation type="journal article" date="2004" name="Nat. Genet.">
        <title>Comparison of genome degradation in Paratyphi A and Typhi, human-restricted serovars of Salmonella enterica that cause typhoid.</title>
        <authorList>
            <person name="McClelland M."/>
            <person name="Sanderson K.E."/>
            <person name="Clifton S.W."/>
            <person name="Latreille P."/>
            <person name="Porwollik S."/>
            <person name="Sabo A."/>
            <person name="Meyer R."/>
            <person name="Bieri T."/>
            <person name="Ozersky P."/>
            <person name="McLellan M."/>
            <person name="Harkins C.R."/>
            <person name="Wang C."/>
            <person name="Nguyen C."/>
            <person name="Berghoff A."/>
            <person name="Elliott G."/>
            <person name="Kohlberg S."/>
            <person name="Strong C."/>
            <person name="Du F."/>
            <person name="Carter J."/>
            <person name="Kremizki C."/>
            <person name="Layman D."/>
            <person name="Leonard S."/>
            <person name="Sun H."/>
            <person name="Fulton L."/>
            <person name="Nash W."/>
            <person name="Miner T."/>
            <person name="Minx P."/>
            <person name="Delehaunty K."/>
            <person name="Fronick C."/>
            <person name="Magrini V."/>
            <person name="Nhan M."/>
            <person name="Warren W."/>
            <person name="Florea L."/>
            <person name="Spieth J."/>
            <person name="Wilson R.K."/>
        </authorList>
    </citation>
    <scope>NUCLEOTIDE SEQUENCE [LARGE SCALE GENOMIC DNA]</scope>
    <source>
        <strain>ATCC 9150 / SARB42</strain>
    </source>
</reference>
<sequence length="207" mass="23686">MTLPDFRLIRLLPLASLVLTACTLPGHKGPGKSPDSPQWRQHQQEVRHLNQYQTRGAFAYISDDQKVYARFFWQQTGQDRYRLLLTNPLGSTELELNAQPGNVQLVDNKGQRYTADDAEEMIGKLTGMPIPLNSLRQWILGLPGDATDYKLDDQYRLSEVNYRQDGKNWKVVYGGYDSKTQPAMPANMELSDGSQRIKLKMDNWIVK</sequence>
<comment type="function">
    <text evidence="1">Plays a critical role in the incorporation of lipoproteins in the outer membrane after they are released by the LolA protein.</text>
</comment>
<comment type="subunit">
    <text evidence="1">Monomer.</text>
</comment>
<comment type="subcellular location">
    <subcellularLocation>
        <location evidence="1">Cell outer membrane</location>
        <topology evidence="1">Lipid-anchor</topology>
    </subcellularLocation>
</comment>
<comment type="similarity">
    <text evidence="1">Belongs to the LolB family.</text>
</comment>